<gene>
    <name type="primary">Bcl2l1</name>
    <name type="synonym">Bclx</name>
    <name type="synonym">Blc2l</name>
</gene>
<proteinExistence type="evidence at protein level"/>
<name>B2CL1_RAT</name>
<organism>
    <name type="scientific">Rattus norvegicus</name>
    <name type="common">Rat</name>
    <dbReference type="NCBI Taxonomy" id="10116"/>
    <lineage>
        <taxon>Eukaryota</taxon>
        <taxon>Metazoa</taxon>
        <taxon>Chordata</taxon>
        <taxon>Craniata</taxon>
        <taxon>Vertebrata</taxon>
        <taxon>Euteleostomi</taxon>
        <taxon>Mammalia</taxon>
        <taxon>Eutheria</taxon>
        <taxon>Euarchontoglires</taxon>
        <taxon>Glires</taxon>
        <taxon>Rodentia</taxon>
        <taxon>Myomorpha</taxon>
        <taxon>Muroidea</taxon>
        <taxon>Muridae</taxon>
        <taxon>Murinae</taxon>
        <taxon>Rattus</taxon>
    </lineage>
</organism>
<reference key="1">
    <citation type="submission" date="1994-12" db="EMBL/GenBank/DDBJ databases">
        <authorList>
            <person name="Michaelidis T.M."/>
        </authorList>
    </citation>
    <scope>NUCLEOTIDE SEQUENCE [GENOMIC DNA] (ISOFORMS BCL-X(L) AND BCL-X(S))</scope>
    <source>
        <tissue>Brain</tissue>
    </source>
</reference>
<reference key="2">
    <citation type="submission" date="1995-06" db="EMBL/GenBank/DDBJ databases">
        <title>Cloning and expression of rat bcl-x in cultured neurons.</title>
        <authorList>
            <person name="Wesselingh S.L."/>
            <person name="David G.L."/>
            <person name="Choi S."/>
            <person name="Veliuona M."/>
            <person name="Hardwick J.M."/>
        </authorList>
    </citation>
    <scope>NUCLEOTIDE SEQUENCE (ISOFORM BCL-X(L))</scope>
    <source>
        <tissue>Brain</tissue>
    </source>
</reference>
<reference key="3">
    <citation type="journal article" date="1996" name="J. Biol. Chem.">
        <title>An additional form of rat Bcl-x, Bcl-xbeta, generated by an unspliced RNA, promotes apoptosis in promyeloid cells.</title>
        <authorList>
            <person name="Shiraiwa N."/>
            <person name="Inohara N."/>
            <person name="Okada S."/>
            <person name="Yuzaki M."/>
            <person name="Shoji S."/>
            <person name="Ohta S."/>
        </authorList>
    </citation>
    <scope>NUCLEOTIDE SEQUENCE [MRNA] (ISOFORMS BCL-X(L) AND BCL-X(BETA))</scope>
    <scope>FUNCTION</scope>
    <source>
        <tissue>Thymus</tissue>
    </source>
</reference>
<reference key="4">
    <citation type="journal article" date="1995" name="Endocrinology">
        <title>Expression of members of the Bcl-2 gene family in the immature rat ovary: equine chorionic gonadotropin-mediated inhibition of granulosa cell apoptosis is associated with decreased Bax and constitutive Bcl-2 and Bcl-xlong messenger ribonucleic acid levels.</title>
        <authorList>
            <person name="Tilly J.L."/>
            <person name="Tilly K.I."/>
            <person name="Kenton M.L."/>
            <person name="Johnson A.L."/>
        </authorList>
    </citation>
    <scope>NUCLEOTIDE SEQUENCE [MRNA] (ISOFORMS BCL-X(L) AND BCL-X(S))</scope>
    <scope>FUNCTION</scope>
    <source>
        <strain>Sprague-Dawley</strain>
        <tissue>Ovary</tissue>
    </source>
</reference>
<reference key="5">
    <citation type="journal article" date="2004" name="Genome Res.">
        <title>The status, quality, and expansion of the NIH full-length cDNA project: the Mammalian Gene Collection (MGC).</title>
        <authorList>
            <consortium name="The MGC Project Team"/>
        </authorList>
    </citation>
    <scope>NUCLEOTIDE SEQUENCE [LARGE SCALE MRNA] (ISOFORM BCL-X(L))</scope>
    <source>
        <tissue>Brain</tissue>
    </source>
</reference>
<reference key="6">
    <citation type="journal article" date="2008" name="Proc. Natl. Acad. Sci. U.S.A.">
        <title>Bcl-xL induces Drp1-dependent synapse formation in cultured hippocampal neurons.</title>
        <authorList>
            <person name="Li H."/>
            <person name="Chen Y."/>
            <person name="Jones A.F."/>
            <person name="Sanger R.H."/>
            <person name="Collis L.P."/>
            <person name="Flannery R."/>
            <person name="McNay E.C."/>
            <person name="Yu T."/>
            <person name="Schwarzenbacher R."/>
            <person name="Bossy B."/>
            <person name="Bossy-Wetzel E."/>
            <person name="Bennett M.V."/>
            <person name="Pypaert M."/>
            <person name="Hickman J.A."/>
            <person name="Smith P.J."/>
            <person name="Hardwick J.M."/>
            <person name="Jonas E.A."/>
        </authorList>
    </citation>
    <scope>FUNCTION IN SYNAPTIC VESICLE REGULATION</scope>
    <scope>INTERACTION WITH DNM1L</scope>
</reference>
<reference key="7">
    <citation type="journal article" date="2011" name="Nat. Cell Biol.">
        <title>Bcl-xL regulates metabolic efficiency of neurons through interaction with the mitochondrial F1FO ATP synthase.</title>
        <authorList>
            <person name="Alavian K.N."/>
            <person name="Li H."/>
            <person name="Collis L."/>
            <person name="Bonanni L."/>
            <person name="Zeng L."/>
            <person name="Sacchetti S."/>
            <person name="Lazrove E."/>
            <person name="Nabili P."/>
            <person name="Flaherty B."/>
            <person name="Graham M."/>
            <person name="Chen Y."/>
            <person name="Messerli S.M."/>
            <person name="Mariggio M.A."/>
            <person name="Rahner C."/>
            <person name="McNay E."/>
            <person name="Shore G.C."/>
            <person name="Smith P.J."/>
            <person name="Hardwick J.M."/>
            <person name="Jonas E.A."/>
        </authorList>
    </citation>
    <scope>FUNCTION IN SYNAPTIC VESICLE REGULATION</scope>
    <scope>INTERACTION WITH ATP5F1A AND ATP5F1B</scope>
    <scope>SUBCELLULAR LOCATION</scope>
</reference>
<reference key="8">
    <citation type="journal article" date="2013" name="Nat. Cell Biol.">
        <title>A Bcl-xL-Drp1 complex regulates synaptic vesicle membrane dynamics during endocytosis.</title>
        <authorList>
            <person name="Li H."/>
            <person name="Alavian K.N."/>
            <person name="Lazrove E."/>
            <person name="Mehta N."/>
            <person name="Jones A."/>
            <person name="Zhang P."/>
            <person name="Licznerski P."/>
            <person name="Graham M."/>
            <person name="Uo T."/>
            <person name="Guo J."/>
            <person name="Rahner C."/>
            <person name="Duman R.S."/>
            <person name="Morrison R.S."/>
            <person name="Jonas E.A."/>
        </authorList>
    </citation>
    <scope>FUNCTION IN SYNAPTIC VESICLE REGULATION</scope>
    <scope>SUBCELLULAR LOCATION</scope>
    <scope>INTERACTION WITH CLTA; DNM1L AND MFF</scope>
</reference>
<reference key="9">
    <citation type="journal article" date="1997" name="J. Biol. Chem.">
        <title>Crystal structure of rat Bcl-xL. Implications for the function of the Bcl-2 protein family.</title>
        <authorList>
            <person name="Aritomi M."/>
            <person name="Kunishima N."/>
            <person name="Inohara N."/>
            <person name="Ishibashi Y."/>
            <person name="Ohta S."/>
            <person name="Morikawa K."/>
        </authorList>
    </citation>
    <scope>X-RAY CRYSTALLOGRAPHY (2.5 ANGSTROMS)</scope>
</reference>
<evidence type="ECO:0000250" key="1"/>
<evidence type="ECO:0000250" key="2">
    <source>
        <dbReference type="UniProtKB" id="Q07817"/>
    </source>
</evidence>
<evidence type="ECO:0000250" key="3">
    <source>
        <dbReference type="UniProtKB" id="Q64373"/>
    </source>
</evidence>
<evidence type="ECO:0000255" key="4"/>
<evidence type="ECO:0000256" key="5">
    <source>
        <dbReference type="SAM" id="MobiDB-lite"/>
    </source>
</evidence>
<evidence type="ECO:0000269" key="6">
    <source>
    </source>
</evidence>
<evidence type="ECO:0000269" key="7">
    <source>
    </source>
</evidence>
<evidence type="ECO:0000269" key="8">
    <source>
    </source>
</evidence>
<evidence type="ECO:0000269" key="9">
    <source>
    </source>
</evidence>
<evidence type="ECO:0000269" key="10">
    <source>
    </source>
</evidence>
<evidence type="ECO:0000305" key="11"/>
<evidence type="ECO:0007829" key="12">
    <source>
        <dbReference type="PDB" id="1AF3"/>
    </source>
</evidence>
<evidence type="ECO:0007829" key="13">
    <source>
        <dbReference type="PDB" id="4QNQ"/>
    </source>
</evidence>
<protein>
    <recommendedName>
        <fullName>Bcl-2-like protein 1</fullName>
        <shortName>Bcl2-L-1</shortName>
    </recommendedName>
    <alternativeName>
        <fullName>Apoptosis regulator Bcl-X</fullName>
    </alternativeName>
</protein>
<sequence>MSQSNRELVVDFLSYKLSQKGYSWSQFSDVEENRTEAPEETEPERETPSAINGNPSWHLADSPAVNGATGHSSSLDAREVIPMAAVKQALREAGDEFELRYRRAFSDLTSQLHITPGTAYQSFEQVVNELFRDGVNWGRIVAFFSFGGALCVESVDKEMQVLVSRIASWMATYLNDHLEPWIQENGGWDTFVDLYGNNAAAESRKGQERFNRWFLTGMTVAGVVLLGSLFSRK</sequence>
<dbReference type="EMBL" id="X82537">
    <property type="protein sequence ID" value="CAA57886.1"/>
    <property type="molecule type" value="Genomic_DNA"/>
</dbReference>
<dbReference type="EMBL" id="X82537">
    <property type="protein sequence ID" value="CAA57887.1"/>
    <property type="molecule type" value="Genomic_DNA"/>
</dbReference>
<dbReference type="EMBL" id="U10579">
    <property type="protein sequence ID" value="AAA19257.1"/>
    <property type="molecule type" value="Unassigned_DNA"/>
</dbReference>
<dbReference type="EMBL" id="U72350">
    <property type="protein sequence ID" value="AAB17353.1"/>
    <property type="molecule type" value="mRNA"/>
</dbReference>
<dbReference type="EMBL" id="U72349">
    <property type="protein sequence ID" value="AAB17352.1"/>
    <property type="molecule type" value="mRNA"/>
</dbReference>
<dbReference type="EMBL" id="U34963">
    <property type="protein sequence ID" value="AAA77686.1"/>
    <property type="molecule type" value="mRNA"/>
</dbReference>
<dbReference type="EMBL" id="S76513">
    <property type="protein sequence ID" value="AAC60701.2"/>
    <property type="status" value="ALT_INIT"/>
    <property type="molecule type" value="mRNA"/>
</dbReference>
<dbReference type="EMBL" id="S78284">
    <property type="protein sequence ID" value="AAC60702.1"/>
    <property type="status" value="ALT_INIT"/>
    <property type="molecule type" value="mRNA"/>
</dbReference>
<dbReference type="EMBL" id="BC094213">
    <property type="protein sequence ID" value="AAH94213.1"/>
    <property type="molecule type" value="mRNA"/>
</dbReference>
<dbReference type="PIR" id="I67431">
    <property type="entry name" value="I67431"/>
</dbReference>
<dbReference type="PIR" id="I67435">
    <property type="entry name" value="I67435"/>
</dbReference>
<dbReference type="PIR" id="S51761">
    <property type="entry name" value="S51761"/>
</dbReference>
<dbReference type="RefSeq" id="NP_001028842.1">
    <molecule id="P53563-1"/>
    <property type="nucleotide sequence ID" value="NM_001033670.1"/>
</dbReference>
<dbReference type="RefSeq" id="NP_001028843.1">
    <molecule id="P53563-2"/>
    <property type="nucleotide sequence ID" value="NM_001033671.1"/>
</dbReference>
<dbReference type="RefSeq" id="NP_113723.2">
    <property type="nucleotide sequence ID" value="NM_031535.2"/>
</dbReference>
<dbReference type="RefSeq" id="XP_006235327.1">
    <molecule id="P53563-1"/>
    <property type="nucleotide sequence ID" value="XM_006235265.5"/>
</dbReference>
<dbReference type="RefSeq" id="XP_038960218.1">
    <molecule id="P53563-1"/>
    <property type="nucleotide sequence ID" value="XM_039104290.2"/>
</dbReference>
<dbReference type="RefSeq" id="XP_038960219.1">
    <molecule id="P53563-1"/>
    <property type="nucleotide sequence ID" value="XM_039104291.2"/>
</dbReference>
<dbReference type="RefSeq" id="XP_038960220.1">
    <molecule id="P53563-2"/>
    <property type="nucleotide sequence ID" value="XM_039104292.2"/>
</dbReference>
<dbReference type="RefSeq" id="XP_063139185.1">
    <molecule id="P53563-1"/>
    <property type="nucleotide sequence ID" value="XM_063283115.1"/>
</dbReference>
<dbReference type="RefSeq" id="XP_063139186.1">
    <molecule id="P53563-1"/>
    <property type="nucleotide sequence ID" value="XM_063283116.1"/>
</dbReference>
<dbReference type="RefSeq" id="XP_063139187.1">
    <molecule id="P53563-2"/>
    <property type="nucleotide sequence ID" value="XM_063283117.1"/>
</dbReference>
<dbReference type="RefSeq" id="XP_063139188.1">
    <molecule id="P53563-2"/>
    <property type="nucleotide sequence ID" value="XM_063283118.1"/>
</dbReference>
<dbReference type="RefSeq" id="XP_063139189.1">
    <molecule id="P53563-2"/>
    <property type="nucleotide sequence ID" value="XM_063283119.1"/>
</dbReference>
<dbReference type="RefSeq" id="XP_063139190.1">
    <molecule id="P53563-2"/>
    <property type="nucleotide sequence ID" value="XM_063283120.1"/>
</dbReference>
<dbReference type="PDB" id="1AF3">
    <property type="method" value="X-ray"/>
    <property type="resolution" value="2.50 A"/>
    <property type="chains" value="A=1-196"/>
</dbReference>
<dbReference type="PDB" id="4QNQ">
    <property type="method" value="X-ray"/>
    <property type="resolution" value="2.30 A"/>
    <property type="chains" value="A/B/C/D/E/F/G/H/I/J/K/L=1-233"/>
</dbReference>
<dbReference type="PDBsum" id="1AF3"/>
<dbReference type="PDBsum" id="4QNQ"/>
<dbReference type="BMRB" id="P53563"/>
<dbReference type="SMR" id="P53563"/>
<dbReference type="BioGRID" id="246998">
    <property type="interactions" value="5"/>
</dbReference>
<dbReference type="ComplexPortal" id="CPX-2022">
    <molecule id="P53563-1"/>
    <property type="entry name" value="BAD:BCL-XL complex"/>
</dbReference>
<dbReference type="ComplexPortal" id="CPX-2026">
    <molecule id="P53563-1"/>
    <property type="entry name" value="BIM:BCL-XL complex"/>
</dbReference>
<dbReference type="ComplexPortal" id="CPX-2030">
    <molecule id="P53563-1"/>
    <property type="entry name" value="PUMA:BCL-XL complex"/>
</dbReference>
<dbReference type="ComplexPortal" id="CPX-2038">
    <molecule id="P53563-1"/>
    <property type="entry name" value="BID:BCL-XL complex"/>
</dbReference>
<dbReference type="ComplexPortal" id="CPX-300">
    <molecule id="P53563-1"/>
    <property type="entry name" value="BCL-XL complex"/>
</dbReference>
<dbReference type="CORUM" id="P53563"/>
<dbReference type="DIP" id="DIP-29698N"/>
<dbReference type="FunCoup" id="P53563">
    <property type="interactions" value="1881"/>
</dbReference>
<dbReference type="IntAct" id="P53563">
    <property type="interactions" value="5"/>
</dbReference>
<dbReference type="STRING" id="10116.ENSRNOP00000069758"/>
<dbReference type="ChEMBL" id="CHEMBL1075182"/>
<dbReference type="iPTMnet" id="P53563"/>
<dbReference type="PhosphoSitePlus" id="P53563"/>
<dbReference type="SwissPalm" id="P53563"/>
<dbReference type="jPOST" id="P53563"/>
<dbReference type="PaxDb" id="10116-ENSRNOP00000043542"/>
<dbReference type="Ensembl" id="ENSRNOT00000010762.8">
    <molecule id="P53563-1"/>
    <property type="protein sequence ID" value="ENSRNOP00000010762.4"/>
    <property type="gene ID" value="ENSRNOG00000007946.8"/>
</dbReference>
<dbReference type="GeneID" id="24888"/>
<dbReference type="KEGG" id="rno:24888"/>
<dbReference type="UCSC" id="RGD:2200">
    <molecule id="P53563-1"/>
    <property type="organism name" value="rat"/>
</dbReference>
<dbReference type="AGR" id="RGD:2200"/>
<dbReference type="CTD" id="598"/>
<dbReference type="RGD" id="2200">
    <property type="gene designation" value="Bcl2l1"/>
</dbReference>
<dbReference type="eggNOG" id="KOG4728">
    <property type="taxonomic scope" value="Eukaryota"/>
</dbReference>
<dbReference type="GeneTree" id="ENSGT01130000278332"/>
<dbReference type="HOGENOM" id="CLU_085401_0_1_1"/>
<dbReference type="InParanoid" id="P53563"/>
<dbReference type="OMA" id="HAPTSHI"/>
<dbReference type="OrthoDB" id="6021377at2759"/>
<dbReference type="PhylomeDB" id="P53563"/>
<dbReference type="Reactome" id="R-RNO-111453">
    <property type="pathway name" value="BH3-only proteins associate with and inactivate anti-apoptotic BCL-2 members"/>
</dbReference>
<dbReference type="Reactome" id="R-RNO-844455">
    <property type="pathway name" value="The NLRP1 inflammasome"/>
</dbReference>
<dbReference type="Reactome" id="R-RNO-9648002">
    <property type="pathway name" value="RAS processing"/>
</dbReference>
<dbReference type="EvolutionaryTrace" id="P53563"/>
<dbReference type="PRO" id="PR:P53563"/>
<dbReference type="Proteomes" id="UP000002494">
    <property type="component" value="Chromosome 3"/>
</dbReference>
<dbReference type="Bgee" id="ENSRNOG00000007946">
    <property type="expression patterns" value="Expressed in thymus and 19 other cell types or tissues"/>
</dbReference>
<dbReference type="ExpressionAtlas" id="P53563">
    <property type="expression patterns" value="baseline and differential"/>
</dbReference>
<dbReference type="GO" id="GO:0097136">
    <property type="term" value="C:Bcl-2 family protein complex"/>
    <property type="evidence" value="ECO:0000266"/>
    <property type="project" value="ComplexPortal"/>
</dbReference>
<dbReference type="GO" id="GO:0005813">
    <property type="term" value="C:centrosome"/>
    <property type="evidence" value="ECO:0000250"/>
    <property type="project" value="UniProtKB"/>
</dbReference>
<dbReference type="GO" id="GO:0005737">
    <property type="term" value="C:cytoplasm"/>
    <property type="evidence" value="ECO:0000266"/>
    <property type="project" value="RGD"/>
</dbReference>
<dbReference type="GO" id="GO:0005829">
    <property type="term" value="C:cytosol"/>
    <property type="evidence" value="ECO:0000314"/>
    <property type="project" value="RGD"/>
</dbReference>
<dbReference type="GO" id="GO:0005783">
    <property type="term" value="C:endoplasmic reticulum"/>
    <property type="evidence" value="ECO:0000266"/>
    <property type="project" value="RGD"/>
</dbReference>
<dbReference type="GO" id="GO:0016020">
    <property type="term" value="C:membrane"/>
    <property type="evidence" value="ECO:0000266"/>
    <property type="project" value="RGD"/>
</dbReference>
<dbReference type="GO" id="GO:0005743">
    <property type="term" value="C:mitochondrial inner membrane"/>
    <property type="evidence" value="ECO:0007669"/>
    <property type="project" value="UniProtKB-SubCell"/>
</dbReference>
<dbReference type="GO" id="GO:0005759">
    <property type="term" value="C:mitochondrial matrix"/>
    <property type="evidence" value="ECO:0007669"/>
    <property type="project" value="UniProtKB-SubCell"/>
</dbReference>
<dbReference type="GO" id="GO:0031966">
    <property type="term" value="C:mitochondrial membrane"/>
    <property type="evidence" value="ECO:0000266"/>
    <property type="project" value="RGD"/>
</dbReference>
<dbReference type="GO" id="GO:0005741">
    <property type="term" value="C:mitochondrial outer membrane"/>
    <property type="evidence" value="ECO:0000314"/>
    <property type="project" value="RGD"/>
</dbReference>
<dbReference type="GO" id="GO:0005739">
    <property type="term" value="C:mitochondrion"/>
    <property type="evidence" value="ECO:0000314"/>
    <property type="project" value="RGD"/>
</dbReference>
<dbReference type="GO" id="GO:0031965">
    <property type="term" value="C:nuclear membrane"/>
    <property type="evidence" value="ECO:0007669"/>
    <property type="project" value="UniProtKB-SubCell"/>
</dbReference>
<dbReference type="GO" id="GO:0098793">
    <property type="term" value="C:presynapse"/>
    <property type="evidence" value="ECO:0000314"/>
    <property type="project" value="CAFA"/>
</dbReference>
<dbReference type="GO" id="GO:0008021">
    <property type="term" value="C:synaptic vesicle"/>
    <property type="evidence" value="ECO:0000314"/>
    <property type="project" value="SynGO"/>
</dbReference>
<dbReference type="GO" id="GO:0030672">
    <property type="term" value="C:synaptic vesicle membrane"/>
    <property type="evidence" value="ECO:0007669"/>
    <property type="project" value="UniProtKB-SubCell"/>
</dbReference>
<dbReference type="GO" id="GO:0051400">
    <property type="term" value="F:BH domain binding"/>
    <property type="evidence" value="ECO:0000353"/>
    <property type="project" value="RGD"/>
</dbReference>
<dbReference type="GO" id="GO:0051434">
    <property type="term" value="F:BH3 domain binding"/>
    <property type="evidence" value="ECO:0000266"/>
    <property type="project" value="RGD"/>
</dbReference>
<dbReference type="GO" id="GO:0015267">
    <property type="term" value="F:channel activity"/>
    <property type="evidence" value="ECO:0000318"/>
    <property type="project" value="GO_Central"/>
</dbReference>
<dbReference type="GO" id="GO:0030276">
    <property type="term" value="F:clathrin binding"/>
    <property type="evidence" value="ECO:0000353"/>
    <property type="project" value="CAFA"/>
</dbReference>
<dbReference type="GO" id="GO:0043027">
    <property type="term" value="F:cysteine-type endopeptidase inhibitor activity involved in apoptotic process"/>
    <property type="evidence" value="ECO:0000314"/>
    <property type="project" value="RGD"/>
</dbReference>
<dbReference type="GO" id="GO:0051020">
    <property type="term" value="F:GTPase binding"/>
    <property type="evidence" value="ECO:0000353"/>
    <property type="project" value="CAFA"/>
</dbReference>
<dbReference type="GO" id="GO:0042802">
    <property type="term" value="F:identical protein binding"/>
    <property type="evidence" value="ECO:0000266"/>
    <property type="project" value="RGD"/>
</dbReference>
<dbReference type="GO" id="GO:0097371">
    <property type="term" value="F:MDM2/MDM4 family protein binding"/>
    <property type="evidence" value="ECO:0000353"/>
    <property type="project" value="RGD"/>
</dbReference>
<dbReference type="GO" id="GO:0019901">
    <property type="term" value="F:protein kinase binding"/>
    <property type="evidence" value="ECO:0000266"/>
    <property type="project" value="RGD"/>
</dbReference>
<dbReference type="GO" id="GO:0044877">
    <property type="term" value="F:protein-containing complex binding"/>
    <property type="evidence" value="ECO:0000353"/>
    <property type="project" value="RGD"/>
</dbReference>
<dbReference type="GO" id="GO:0006915">
    <property type="term" value="P:apoptotic process"/>
    <property type="evidence" value="ECO:0000266"/>
    <property type="project" value="RGD"/>
</dbReference>
<dbReference type="GO" id="GO:0071839">
    <property type="term" value="P:apoptotic process in bone marrow cell"/>
    <property type="evidence" value="ECO:0000266"/>
    <property type="project" value="RGD"/>
</dbReference>
<dbReference type="GO" id="GO:0071312">
    <property type="term" value="P:cellular response to alkaloid"/>
    <property type="evidence" value="ECO:0000266"/>
    <property type="project" value="RGD"/>
</dbReference>
<dbReference type="GO" id="GO:0071230">
    <property type="term" value="P:cellular response to amino acid stimulus"/>
    <property type="evidence" value="ECO:0000266"/>
    <property type="project" value="RGD"/>
</dbReference>
<dbReference type="GO" id="GO:1905218">
    <property type="term" value="P:cellular response to astaxanthin"/>
    <property type="evidence" value="ECO:0000270"/>
    <property type="project" value="RGD"/>
</dbReference>
<dbReference type="GO" id="GO:0071320">
    <property type="term" value="P:cellular response to cAMP"/>
    <property type="evidence" value="ECO:0000270"/>
    <property type="project" value="RGD"/>
</dbReference>
<dbReference type="GO" id="GO:0071549">
    <property type="term" value="P:cellular response to dexamethasone stimulus"/>
    <property type="evidence" value="ECO:0000270"/>
    <property type="project" value="RGD"/>
</dbReference>
<dbReference type="GO" id="GO:0036018">
    <property type="term" value="P:cellular response to erythropoietin"/>
    <property type="evidence" value="ECO:0000270"/>
    <property type="project" value="RGD"/>
</dbReference>
<dbReference type="GO" id="GO:0071480">
    <property type="term" value="P:cellular response to gamma radiation"/>
    <property type="evidence" value="ECO:0000266"/>
    <property type="project" value="RGD"/>
</dbReference>
<dbReference type="GO" id="GO:0071456">
    <property type="term" value="P:cellular response to hypoxia"/>
    <property type="evidence" value="ECO:0000270"/>
    <property type="project" value="RGD"/>
</dbReference>
<dbReference type="GO" id="GO:0071347">
    <property type="term" value="P:cellular response to interleukin-1"/>
    <property type="evidence" value="ECO:0000270"/>
    <property type="project" value="RGD"/>
</dbReference>
<dbReference type="GO" id="GO:0071732">
    <property type="term" value="P:cellular response to nitric oxide"/>
    <property type="evidence" value="ECO:0000270"/>
    <property type="project" value="RGD"/>
</dbReference>
<dbReference type="GO" id="GO:1990646">
    <property type="term" value="P:cellular response to prolactin"/>
    <property type="evidence" value="ECO:0000270"/>
    <property type="project" value="RGD"/>
</dbReference>
<dbReference type="GO" id="GO:0071356">
    <property type="term" value="P:cellular response to tumor necrosis factor"/>
    <property type="evidence" value="ECO:0000270"/>
    <property type="project" value="RGD"/>
</dbReference>
<dbReference type="GO" id="GO:0071466">
    <property type="term" value="P:cellular response to xenobiotic stimulus"/>
    <property type="evidence" value="ECO:0000270"/>
    <property type="project" value="RGD"/>
</dbReference>
<dbReference type="GO" id="GO:0021987">
    <property type="term" value="P:cerebral cortex development"/>
    <property type="evidence" value="ECO:0000270"/>
    <property type="project" value="RGD"/>
</dbReference>
<dbReference type="GO" id="GO:0097048">
    <property type="term" value="P:dendritic cell apoptotic process"/>
    <property type="evidence" value="ECO:0000266"/>
    <property type="project" value="RGD"/>
</dbReference>
<dbReference type="GO" id="GO:0044565">
    <property type="term" value="P:dendritic cell proliferation"/>
    <property type="evidence" value="ECO:0000266"/>
    <property type="project" value="RGD"/>
</dbReference>
<dbReference type="GO" id="GO:0035234">
    <property type="term" value="P:ectopic germ cell programmed cell death"/>
    <property type="evidence" value="ECO:0000266"/>
    <property type="project" value="RGD"/>
</dbReference>
<dbReference type="GO" id="GO:0006897">
    <property type="term" value="P:endocytosis"/>
    <property type="evidence" value="ECO:0007669"/>
    <property type="project" value="UniProtKB-KW"/>
</dbReference>
<dbReference type="GO" id="GO:0050673">
    <property type="term" value="P:epithelial cell proliferation"/>
    <property type="evidence" value="ECO:0000266"/>
    <property type="project" value="RGD"/>
</dbReference>
<dbReference type="GO" id="GO:0097192">
    <property type="term" value="P:extrinsic apoptotic signaling pathway in absence of ligand"/>
    <property type="evidence" value="ECO:0000266"/>
    <property type="project" value="RGD"/>
</dbReference>
<dbReference type="GO" id="GO:0009566">
    <property type="term" value="P:fertilization"/>
    <property type="evidence" value="ECO:0000266"/>
    <property type="project" value="RGD"/>
</dbReference>
<dbReference type="GO" id="GO:0007281">
    <property type="term" value="P:germ cell development"/>
    <property type="evidence" value="ECO:0000266"/>
    <property type="project" value="RGD"/>
</dbReference>
<dbReference type="GO" id="GO:0097284">
    <property type="term" value="P:hepatocyte apoptotic process"/>
    <property type="evidence" value="ECO:0000266"/>
    <property type="project" value="RGD"/>
</dbReference>
<dbReference type="GO" id="GO:0001701">
    <property type="term" value="P:in utero embryonic development"/>
    <property type="evidence" value="ECO:0000266"/>
    <property type="project" value="RGD"/>
</dbReference>
<dbReference type="GO" id="GO:0008630">
    <property type="term" value="P:intrinsic apoptotic signaling pathway in response to DNA damage"/>
    <property type="evidence" value="ECO:0000266"/>
    <property type="project" value="RGD"/>
</dbReference>
<dbReference type="GO" id="GO:0008584">
    <property type="term" value="P:male gonad development"/>
    <property type="evidence" value="ECO:0000266"/>
    <property type="project" value="RGD"/>
</dbReference>
<dbReference type="GO" id="GO:0007005">
    <property type="term" value="P:mitochondrion organization"/>
    <property type="evidence" value="ECO:0000266"/>
    <property type="project" value="RGD"/>
</dbReference>
<dbReference type="GO" id="GO:0043066">
    <property type="term" value="P:negative regulation of apoptotic process"/>
    <property type="evidence" value="ECO:0000314"/>
    <property type="project" value="RGD"/>
</dbReference>
<dbReference type="GO" id="GO:2000669">
    <property type="term" value="P:negative regulation of dendritic cell apoptotic process"/>
    <property type="evidence" value="ECO:0000266"/>
    <property type="project" value="RGD"/>
</dbReference>
<dbReference type="GO" id="GO:0051093">
    <property type="term" value="P:negative regulation of developmental process"/>
    <property type="evidence" value="ECO:0000266"/>
    <property type="project" value="RGD"/>
</dbReference>
<dbReference type="GO" id="GO:1902236">
    <property type="term" value="P:negative regulation of endoplasmic reticulum stress-induced intrinsic apoptotic signaling pathway"/>
    <property type="evidence" value="ECO:0000250"/>
    <property type="project" value="UniProtKB"/>
</dbReference>
<dbReference type="GO" id="GO:1900118">
    <property type="term" value="P:negative regulation of execution phase of apoptosis"/>
    <property type="evidence" value="ECO:0000250"/>
    <property type="project" value="UniProtKB"/>
</dbReference>
<dbReference type="GO" id="GO:1902042">
    <property type="term" value="P:negative regulation of extrinsic apoptotic signaling pathway via death domain receptors"/>
    <property type="evidence" value="ECO:0000266"/>
    <property type="project" value="RGD"/>
</dbReference>
<dbReference type="GO" id="GO:2001243">
    <property type="term" value="P:negative regulation of intrinsic apoptotic signaling pathway"/>
    <property type="evidence" value="ECO:0000266"/>
    <property type="project" value="RGD"/>
</dbReference>
<dbReference type="GO" id="GO:1902230">
    <property type="term" value="P:negative regulation of intrinsic apoptotic signaling pathway in response to DNA damage"/>
    <property type="evidence" value="ECO:0000266"/>
    <property type="project" value="RGD"/>
</dbReference>
<dbReference type="GO" id="GO:1901029">
    <property type="term" value="P:negative regulation of mitochondrial outer membrane permeabilization involved in apoptotic signaling pathway"/>
    <property type="evidence" value="ECO:0000266"/>
    <property type="project" value="ComplexPortal"/>
</dbReference>
<dbReference type="GO" id="GO:0043524">
    <property type="term" value="P:negative regulation of neuron apoptotic process"/>
    <property type="evidence" value="ECO:0000266"/>
    <property type="project" value="RGD"/>
</dbReference>
<dbReference type="GO" id="GO:1903077">
    <property type="term" value="P:negative regulation of protein localization to plasma membrane"/>
    <property type="evidence" value="ECO:0000266"/>
    <property type="project" value="RGD"/>
</dbReference>
<dbReference type="GO" id="GO:0090201">
    <property type="term" value="P:negative regulation of release of cytochrome c from mitochondria"/>
    <property type="evidence" value="ECO:0000266"/>
    <property type="project" value="ComplexPortal"/>
</dbReference>
<dbReference type="GO" id="GO:2000242">
    <property type="term" value="P:negative regulation of reproductive process"/>
    <property type="evidence" value="ECO:0000266"/>
    <property type="project" value="RGD"/>
</dbReference>
<dbReference type="GO" id="GO:0051402">
    <property type="term" value="P:neuron apoptotic process"/>
    <property type="evidence" value="ECO:0000266"/>
    <property type="project" value="RGD"/>
</dbReference>
<dbReference type="GO" id="GO:0001541">
    <property type="term" value="P:ovarian follicle development"/>
    <property type="evidence" value="ECO:0000315"/>
    <property type="project" value="RGD"/>
</dbReference>
<dbReference type="GO" id="GO:0043065">
    <property type="term" value="P:positive regulation of apoptotic process"/>
    <property type="evidence" value="ECO:0000315"/>
    <property type="project" value="RGD"/>
</dbReference>
<dbReference type="GO" id="GO:2001171">
    <property type="term" value="P:positive regulation of ATP biosynthetic process"/>
    <property type="evidence" value="ECO:0000315"/>
    <property type="project" value="CAFA"/>
</dbReference>
<dbReference type="GO" id="GO:0032946">
    <property type="term" value="P:positive regulation of mononuclear cell proliferation"/>
    <property type="evidence" value="ECO:0000266"/>
    <property type="project" value="RGD"/>
</dbReference>
<dbReference type="GO" id="GO:2000809">
    <property type="term" value="P:positive regulation of synaptic vesicle clustering"/>
    <property type="evidence" value="ECO:0000315"/>
    <property type="project" value="CAFA"/>
</dbReference>
<dbReference type="GO" id="GO:1900244">
    <property type="term" value="P:positive regulation of synaptic vesicle endocytosis"/>
    <property type="evidence" value="ECO:0000315"/>
    <property type="project" value="CAFA"/>
</dbReference>
<dbReference type="GO" id="GO:2000302">
    <property type="term" value="P:positive regulation of synaptic vesicle exocytosis"/>
    <property type="evidence" value="ECO:0000315"/>
    <property type="project" value="CAFA"/>
</dbReference>
<dbReference type="GO" id="GO:0042981">
    <property type="term" value="P:regulation of apoptotic process"/>
    <property type="evidence" value="ECO:0000314"/>
    <property type="project" value="RGD"/>
</dbReference>
<dbReference type="GO" id="GO:0032465">
    <property type="term" value="P:regulation of cytokinesis"/>
    <property type="evidence" value="ECO:0000250"/>
    <property type="project" value="UniProtKB"/>
</dbReference>
<dbReference type="GO" id="GO:0040008">
    <property type="term" value="P:regulation of growth"/>
    <property type="evidence" value="ECO:0000266"/>
    <property type="project" value="RGD"/>
</dbReference>
<dbReference type="GO" id="GO:1900452">
    <property type="term" value="P:regulation of long-term synaptic depression"/>
    <property type="evidence" value="ECO:0000315"/>
    <property type="project" value="CAFA"/>
</dbReference>
<dbReference type="GO" id="GO:0046902">
    <property type="term" value="P:regulation of mitochondrial membrane permeability"/>
    <property type="evidence" value="ECO:0000266"/>
    <property type="project" value="RGD"/>
</dbReference>
<dbReference type="GO" id="GO:0051881">
    <property type="term" value="P:regulation of mitochondrial membrane potential"/>
    <property type="evidence" value="ECO:0000266"/>
    <property type="project" value="RGD"/>
</dbReference>
<dbReference type="GO" id="GO:1900242">
    <property type="term" value="P:regulation of synaptic vesicle endocytosis"/>
    <property type="evidence" value="ECO:0000314"/>
    <property type="project" value="SynGO"/>
</dbReference>
<dbReference type="GO" id="GO:0001836">
    <property type="term" value="P:release of cytochrome c from mitochondria"/>
    <property type="evidence" value="ECO:0000266"/>
    <property type="project" value="RGD"/>
</dbReference>
<dbReference type="GO" id="GO:0072347">
    <property type="term" value="P:response to anesthetic"/>
    <property type="evidence" value="ECO:0000270"/>
    <property type="project" value="RGD"/>
</dbReference>
<dbReference type="GO" id="GO:0046898">
    <property type="term" value="P:response to cycloheximide"/>
    <property type="evidence" value="ECO:0000266"/>
    <property type="project" value="RGD"/>
</dbReference>
<dbReference type="GO" id="GO:0034097">
    <property type="term" value="P:response to cytokine"/>
    <property type="evidence" value="ECO:0000266"/>
    <property type="project" value="RGD"/>
</dbReference>
<dbReference type="GO" id="GO:0051602">
    <property type="term" value="P:response to electrical stimulus"/>
    <property type="evidence" value="ECO:0000270"/>
    <property type="project" value="RGD"/>
</dbReference>
<dbReference type="GO" id="GO:0034976">
    <property type="term" value="P:response to endoplasmic reticulum stress"/>
    <property type="evidence" value="ECO:0000270"/>
    <property type="project" value="RGD"/>
</dbReference>
<dbReference type="GO" id="GO:0036017">
    <property type="term" value="P:response to erythropoietin"/>
    <property type="evidence" value="ECO:0000270"/>
    <property type="project" value="RGD"/>
</dbReference>
<dbReference type="GO" id="GO:0042542">
    <property type="term" value="P:response to hydrogen peroxide"/>
    <property type="evidence" value="ECO:0000270"/>
    <property type="project" value="RGD"/>
</dbReference>
<dbReference type="GO" id="GO:0001666">
    <property type="term" value="P:response to hypoxia"/>
    <property type="evidence" value="ECO:0000270"/>
    <property type="project" value="RGD"/>
</dbReference>
<dbReference type="GO" id="GO:0002931">
    <property type="term" value="P:response to ischemia"/>
    <property type="evidence" value="ECO:0000314"/>
    <property type="project" value="RGD"/>
</dbReference>
<dbReference type="GO" id="GO:0010288">
    <property type="term" value="P:response to lead ion"/>
    <property type="evidence" value="ECO:0000270"/>
    <property type="project" value="RGD"/>
</dbReference>
<dbReference type="GO" id="GO:0032496">
    <property type="term" value="P:response to lipopolysaccharide"/>
    <property type="evidence" value="ECO:0000270"/>
    <property type="project" value="RGD"/>
</dbReference>
<dbReference type="GO" id="GO:0006979">
    <property type="term" value="P:response to oxidative stress"/>
    <property type="evidence" value="ECO:0000270"/>
    <property type="project" value="RGD"/>
</dbReference>
<dbReference type="GO" id="GO:0043434">
    <property type="term" value="P:response to peptide hormone"/>
    <property type="evidence" value="ECO:0000270"/>
    <property type="project" value="RGD"/>
</dbReference>
<dbReference type="GO" id="GO:0009314">
    <property type="term" value="P:response to radiation"/>
    <property type="evidence" value="ECO:0000266"/>
    <property type="project" value="RGD"/>
</dbReference>
<dbReference type="GO" id="GO:0009615">
    <property type="term" value="P:response to virus"/>
    <property type="evidence" value="ECO:0000266"/>
    <property type="project" value="RGD"/>
</dbReference>
<dbReference type="GO" id="GO:0009410">
    <property type="term" value="P:response to xenobiotic stimulus"/>
    <property type="evidence" value="ECO:0000270"/>
    <property type="project" value="RGD"/>
</dbReference>
<dbReference type="GO" id="GO:0007283">
    <property type="term" value="P:spermatogenesis"/>
    <property type="evidence" value="ECO:0000266"/>
    <property type="project" value="RGD"/>
</dbReference>
<dbReference type="GO" id="GO:0036466">
    <property type="term" value="P:synaptic vesicle recycling via endosome"/>
    <property type="evidence" value="ECO:0000315"/>
    <property type="project" value="CAFA"/>
</dbReference>
<dbReference type="CDD" id="cd06845">
    <property type="entry name" value="Bcl-2_like"/>
    <property type="match status" value="1"/>
</dbReference>
<dbReference type="DisProt" id="DP00449"/>
<dbReference type="FunFam" id="1.10.437.10:FF:000003">
    <property type="entry name" value="Bcl-2-like protein 1"/>
    <property type="match status" value="1"/>
</dbReference>
<dbReference type="Gene3D" id="1.10.437.10">
    <property type="entry name" value="Blc2-like"/>
    <property type="match status" value="1"/>
</dbReference>
<dbReference type="InterPro" id="IPR013279">
    <property type="entry name" value="Apop_reg_BclX"/>
</dbReference>
<dbReference type="InterPro" id="IPR036834">
    <property type="entry name" value="Bcl-2-like_sf"/>
</dbReference>
<dbReference type="InterPro" id="IPR046371">
    <property type="entry name" value="Bcl-2_BH1-3"/>
</dbReference>
<dbReference type="InterPro" id="IPR026298">
    <property type="entry name" value="Bcl-2_fam"/>
</dbReference>
<dbReference type="InterPro" id="IPR002475">
    <property type="entry name" value="Bcl2-like"/>
</dbReference>
<dbReference type="InterPro" id="IPR004725">
    <property type="entry name" value="Bcl2/BclX"/>
</dbReference>
<dbReference type="InterPro" id="IPR020717">
    <property type="entry name" value="Bcl2_BH1_motif_CS"/>
</dbReference>
<dbReference type="InterPro" id="IPR020726">
    <property type="entry name" value="Bcl2_BH2_motif_CS"/>
</dbReference>
<dbReference type="InterPro" id="IPR020728">
    <property type="entry name" value="Bcl2_BH3_motif_CS"/>
</dbReference>
<dbReference type="InterPro" id="IPR003093">
    <property type="entry name" value="Bcl2_BH4"/>
</dbReference>
<dbReference type="InterPro" id="IPR020731">
    <property type="entry name" value="Bcl2_BH4_motif_CS"/>
</dbReference>
<dbReference type="NCBIfam" id="TIGR00865">
    <property type="entry name" value="bcl-2"/>
    <property type="match status" value="1"/>
</dbReference>
<dbReference type="PANTHER" id="PTHR11256">
    <property type="entry name" value="BCL-2 RELATED"/>
    <property type="match status" value="1"/>
</dbReference>
<dbReference type="PANTHER" id="PTHR11256:SF12">
    <property type="entry name" value="BCL-2-LIKE PROTEIN 1"/>
    <property type="match status" value="1"/>
</dbReference>
<dbReference type="Pfam" id="PF00452">
    <property type="entry name" value="Bcl-2"/>
    <property type="match status" value="1"/>
</dbReference>
<dbReference type="Pfam" id="PF02180">
    <property type="entry name" value="BH4"/>
    <property type="match status" value="1"/>
</dbReference>
<dbReference type="PRINTS" id="PR01864">
    <property type="entry name" value="APOPREGBCLX"/>
</dbReference>
<dbReference type="PRINTS" id="PR01862">
    <property type="entry name" value="BCL2FAMILY"/>
</dbReference>
<dbReference type="SMART" id="SM00337">
    <property type="entry name" value="BCL"/>
    <property type="match status" value="1"/>
</dbReference>
<dbReference type="SMART" id="SM00265">
    <property type="entry name" value="BH4"/>
    <property type="match status" value="1"/>
</dbReference>
<dbReference type="SUPFAM" id="SSF56854">
    <property type="entry name" value="Bcl-2 inhibitors of programmed cell death"/>
    <property type="match status" value="1"/>
</dbReference>
<dbReference type="PROSITE" id="PS50062">
    <property type="entry name" value="BCL2_FAMILY"/>
    <property type="match status" value="1"/>
</dbReference>
<dbReference type="PROSITE" id="PS01080">
    <property type="entry name" value="BH1"/>
    <property type="match status" value="1"/>
</dbReference>
<dbReference type="PROSITE" id="PS01258">
    <property type="entry name" value="BH2"/>
    <property type="match status" value="1"/>
</dbReference>
<dbReference type="PROSITE" id="PS01259">
    <property type="entry name" value="BH3"/>
    <property type="match status" value="1"/>
</dbReference>
<dbReference type="PROSITE" id="PS01260">
    <property type="entry name" value="BH4_1"/>
    <property type="match status" value="1"/>
</dbReference>
<dbReference type="PROSITE" id="PS50063">
    <property type="entry name" value="BH4_2"/>
    <property type="match status" value="1"/>
</dbReference>
<comment type="function">
    <text>Potent inhibitor of cell death. Inhibits activation of caspases. Appears to regulate cell death by blocking the voltage-dependent anion channel (VDAC) by binding to it and preventing the release of the caspase activator, CYC1, from the mitochondrial membrane. Also acts as a regulator of G2 checkpoint and progression to cytokinesis during mitosis.</text>
</comment>
<comment type="function">
    <text evidence="2 6 7 8 9 10">Isoform Bcl-X(L) also regulates presynaptic plasticity, including neurotransmitter release and recovery, number of axonal mitochondria as well as size and number of synaptic vesicle clusters. During synaptic stimulation, increases ATP availability from mitochondria through regulation of mitochondrial membrane ATP synthase F(1)F(0) activity and regulates endocytic vesicle retrieval in hippocampal neurons through association with DMN1L and stimulation of its GTPase activity in synaptic vesicles. May attenuate inflammation impairing NLRP1-inflammasome activation, hence CASP1 activation and IL1B release (By similarity).</text>
</comment>
<comment type="function">
    <text>Isoform Bcl-X(S) promotes apoptosis.</text>
</comment>
<comment type="subunit">
    <text evidence="2 3 7">Homodimer. Interacts with BCL2L11 (By similarity). Interacts with BAD. Interacts with PGAM5. Interacts with HEBP2. Interacts with p53/TP53 and BBC3; interaction with BBC3 disrupts the interaction with p53/TP53. Interacts with ATP5F1A and ATP5F1B; the interactions mediate the association of isoform Bcl-X(L) with the mitochondrial membrane ATP synthase F(1)F(0) ATP synthase (PubMed:21926988). Interacts with VDAC1 (By similarity). Interacts with BCL2L11 (via BH3) (By similarity). Interacts with RNF183 (By similarity). Interacts with GIMAP3/IAN4 and GIMAP5/IAN5 (By similarity). Interacts with GIMAP5 and HSPA8/HSC70; the interaction between HSPA8 and BCL2L1 is impaired in the absence of GIMAP5 (By similarity). Interacts with isoform 4 of CLU; this interaction releases and activates BAX and promotes cell death (By similarity).</text>
</comment>
<comment type="subunit">
    <molecule>Isoform Bcl-X(L)</molecule>
    <text evidence="2 6 8">Forms heterodimers with BAX, BAK or BCL2; heterodimerization with BAX does not seem to be required for anti-apoptotic activity (By similarity). Interacts with isoform 1 of SIVA1; the interaction inhibits the anti-apoptotic activity (By similarity). Interacts with IKZF3 (By similarity). Interacts with RTL10/BOP (By similarity). Interacts with DNM1L and CLTA; DNM1L and BCL2L1 isoform BCL-X(L) may form a complex in synaptic vesicles that also contains clathrin and MFF (PubMed:18250306, PubMed:23792689). Interacts (via the loop between motifs BH4 and BH3) with NLRP1 (via LRR repeats), but not with NLRP2, NLRP3, NLRP4, PYCARD, nor MEFV (By similarity). Interacts with BECN1 (By similarity).</text>
</comment>
<comment type="interaction">
    <interactant intactId="EBI-287204">
        <id>P53563-1</id>
    </interactant>
    <interactant intactId="EBI-916140">
        <id>P08081</id>
        <label>Clta</label>
    </interactant>
    <organismsDiffer>false</organismsDiffer>
    <experiments>2</experiments>
</comment>
<comment type="interaction">
    <interactant intactId="EBI-287204">
        <id>P53563-1</id>
    </interactant>
    <interactant intactId="EBI-1767447">
        <id>O35303</id>
        <label>Dnm1l</label>
    </interactant>
    <organismsDiffer>false</organismsDiffer>
    <experiments>4</experiments>
</comment>
<comment type="subcellular location">
    <molecule>Isoform Bcl-X(L)</molecule>
    <subcellularLocation>
        <location>Mitochondrion inner membrane</location>
    </subcellularLocation>
    <subcellularLocation>
        <location>Mitochondrion outer membrane</location>
    </subcellularLocation>
    <subcellularLocation>
        <location>Mitochondrion matrix</location>
    </subcellularLocation>
    <subcellularLocation>
        <location>Cytoplasmic vesicle</location>
        <location>Secretory vesicle</location>
        <location>Synaptic vesicle membrane</location>
    </subcellularLocation>
    <subcellularLocation>
        <location>Cytoplasm</location>
        <location>Cytosol</location>
    </subcellularLocation>
    <subcellularLocation>
        <location evidence="1">Cytoplasm</location>
        <location evidence="1">Cytoskeleton</location>
        <location evidence="1">Microtubule organizing center</location>
        <location evidence="1">Centrosome</location>
    </subcellularLocation>
    <subcellularLocation>
        <location evidence="1">Nucleus membrane</location>
        <topology evidence="1">Single-pass membrane protein</topology>
        <orientation evidence="1">Cytoplasmic side</orientation>
    </subcellularLocation>
    <text evidence="1">Localizes to the centrosome when phosphorylated at Ser-49 (By similarity). After neuronal stimulation, translocates from cytosol to synaptic vesicle and mitochondrion membrane in a calmodulin-dependent manner.</text>
</comment>
<comment type="alternative products">
    <event type="alternative splicing"/>
    <isoform>
        <id>P53563-1</id>
        <name>Bcl-X(L)</name>
        <name>Bcl-xL</name>
        <sequence type="displayed"/>
    </isoform>
    <isoform>
        <id>P53563-2</id>
        <name>Bcl-X(S)</name>
        <name>Bcl-xS</name>
        <sequence type="described" ref="VSP_000520"/>
    </isoform>
    <isoform>
        <id>P53563-3</id>
        <name>Bcl-X(beta)</name>
        <sequence type="described" ref="VSP_000521"/>
    </isoform>
</comment>
<comment type="tissue specificity">
    <text>Expressed in most tissues. Bcl-X(beta) is specifically expressed in cerebellum, heart, and thymus. In the ovary, the predominant form is Bcl-X(L), with a small but detectable level of Bcl-X(S).</text>
</comment>
<comment type="domain">
    <text>The BH4 motif is required for anti-apoptotic activity. The BH1 and BH2 motifs are required for both heterodimerization with other Bcl-2 family members and for repression of cell death.</text>
</comment>
<comment type="domain">
    <text evidence="2">The loop between motifs BH4 and BH3 is required for the interaction with NLRP1.</text>
</comment>
<comment type="PTM">
    <text evidence="1">Proteolytically cleaved by caspases during apoptosis. The cleaved protein, lacking the BH4 motif, has pro-apoptotic activity (By similarity).</text>
</comment>
<comment type="PTM">
    <text evidence="1">Phosphorylated on Ser-62 by CDK1. This phosphorylation is partial in normal mitotic cells, but complete in G2-arrested cells upon DNA-damage, thus promoting subsequent apoptosis probably by triggering caspases-mediated proteolysis. Phosphorylated by PLK3, leading to regulate the G2 checkpoint and progression to cytokinesis during mitosis. Phosphorylation at Ser-49 appears during the S phase and G2, disappears rapidly in early mitosis during prometaphase, metaphase and early anaphase, and re-appears during telophase and cytokinesis (By similarity).</text>
</comment>
<comment type="PTM">
    <text evidence="2">Ubiquitinated by RNF183 during prolonged ER stress, leading to degradation by the proteosome.</text>
</comment>
<comment type="similarity">
    <text evidence="11">Belongs to the Bcl-2 family.</text>
</comment>
<comment type="sequence caution" evidence="11">
    <conflict type="erroneous initiation">
        <sequence resource="EMBL-CDS" id="AAC60701"/>
    </conflict>
    <text>Extended N-terminus.</text>
</comment>
<comment type="sequence caution" evidence="11">
    <conflict type="erroneous initiation">
        <sequence resource="EMBL-CDS" id="AAC60702"/>
    </conflict>
    <text>Extended N-terminus.</text>
</comment>
<accession>P53563</accession>
<accession>P70613</accession>
<accession>P70614</accession>
<accession>Q52KS0</accession>
<accession>Q62678</accession>
<accession>Q62836</accession>
<accession>Q64087</accession>
<accession>Q64128</accession>
<feature type="chain" id="PRO_0000143065" description="Bcl-2-like protein 1">
    <location>
        <begin position="1"/>
        <end position="233"/>
    </location>
</feature>
<feature type="transmembrane region" description="Helical" evidence="4">
    <location>
        <begin position="210"/>
        <end position="226"/>
    </location>
</feature>
<feature type="region of interest" description="Disordered" evidence="5">
    <location>
        <begin position="27"/>
        <end position="73"/>
    </location>
</feature>
<feature type="short sequence motif" description="BH4">
    <location>
        <begin position="4"/>
        <end position="24"/>
    </location>
</feature>
<feature type="short sequence motif" description="BH3">
    <location>
        <begin position="86"/>
        <end position="100"/>
    </location>
</feature>
<feature type="short sequence motif" description="BH1">
    <location>
        <begin position="129"/>
        <end position="148"/>
    </location>
</feature>
<feature type="short sequence motif" description="BH2">
    <location>
        <begin position="180"/>
        <end position="195"/>
    </location>
</feature>
<feature type="modified residue" description="Phosphoserine; by PLK3" evidence="2">
    <location>
        <position position="49"/>
    </location>
</feature>
<feature type="modified residue" description="Phosphoserine; by CDK1" evidence="2">
    <location>
        <position position="62"/>
    </location>
</feature>
<feature type="splice variant" id="VSP_000520" description="In isoform Bcl-X(S)." evidence="11">
    <location>
        <begin position="126"/>
        <end position="188"/>
    </location>
</feature>
<feature type="splice variant" id="VSP_000521" description="In isoform Bcl-X(beta)." evidence="11">
    <original>DTFVDLYGNNAAAESRKGQERFNRWFLTGMTVAGVVLLGSLFSRK</original>
    <variation>VRTTPLVCPPLVCLSSVEIPNCPFWSPGMVVEDIDYSGDIPGLL</variation>
    <location>
        <begin position="189"/>
        <end position="233"/>
    </location>
</feature>
<feature type="sequence conflict" description="In Ref. 1; CAA57886/CAA57887." evidence="11" ref="1">
    <original>R</original>
    <variation>Q</variation>
    <location>
        <position position="6"/>
    </location>
</feature>
<feature type="sequence conflict" description="In Ref. 2; AAA19257." evidence="11" ref="2">
    <original>F</original>
    <variation>S</variation>
    <location>
        <position position="12"/>
    </location>
</feature>
<feature type="sequence conflict" description="In Ref. 2; AAA19257." evidence="11" ref="2">
    <original>A</original>
    <variation>E</variation>
    <location>
        <position position="64"/>
    </location>
</feature>
<feature type="sequence conflict" description="In Ref. 4; AAA77686/AAC60701/AAC60702." evidence="11" ref="4">
    <original>I</original>
    <variation>L</variation>
    <location>
        <position position="81"/>
    </location>
</feature>
<feature type="sequence conflict" description="In Ref. 4; AAA77686/AAC60701/AAC60702." evidence="11" ref="4">
    <original>A</original>
    <variation>V</variation>
    <location>
        <position position="119"/>
    </location>
</feature>
<feature type="sequence conflict" description="In Ref. 4; AAA77686/AAC60701." evidence="11" ref="4">
    <original>FF</original>
    <variation>SS</variation>
    <location>
        <begin position="143"/>
        <end position="144"/>
    </location>
</feature>
<feature type="sequence conflict" description="In Ref. 4; AAA77686/AAC60701/AAC60702." evidence="11" ref="4">
    <original>A</original>
    <variation>T</variation>
    <location>
        <position position="199"/>
    </location>
</feature>
<feature type="sequence conflict" description="In Ref. 4; AAA77686/AAC60701/AAC60702." evidence="11" ref="4">
    <original>A</original>
    <variation>P</variation>
    <location>
        <position position="201"/>
    </location>
</feature>
<feature type="helix" evidence="13">
    <location>
        <begin position="2"/>
        <end position="19"/>
    </location>
</feature>
<feature type="turn" evidence="12">
    <location>
        <begin position="25"/>
        <end position="28"/>
    </location>
</feature>
<feature type="helix" evidence="13">
    <location>
        <begin position="82"/>
        <end position="100"/>
    </location>
</feature>
<feature type="helix" evidence="13">
    <location>
        <begin position="102"/>
        <end position="111"/>
    </location>
</feature>
<feature type="turn" evidence="13">
    <location>
        <begin position="116"/>
        <end position="118"/>
    </location>
</feature>
<feature type="helix" evidence="13">
    <location>
        <begin position="119"/>
        <end position="130"/>
    </location>
</feature>
<feature type="turn" evidence="13">
    <location>
        <begin position="131"/>
        <end position="133"/>
    </location>
</feature>
<feature type="helix" evidence="13">
    <location>
        <begin position="137"/>
        <end position="156"/>
    </location>
</feature>
<feature type="helix" evidence="13">
    <location>
        <begin position="162"/>
        <end position="177"/>
    </location>
</feature>
<feature type="helix" evidence="13">
    <location>
        <begin position="179"/>
        <end position="184"/>
    </location>
</feature>
<feature type="helix" evidence="13">
    <location>
        <begin position="187"/>
        <end position="196"/>
    </location>
</feature>
<keyword id="KW-0002">3D-structure</keyword>
<keyword id="KW-0025">Alternative splicing</keyword>
<keyword id="KW-0053">Apoptosis</keyword>
<keyword id="KW-0963">Cytoplasm</keyword>
<keyword id="KW-0968">Cytoplasmic vesicle</keyword>
<keyword id="KW-0206">Cytoskeleton</keyword>
<keyword id="KW-0254">Endocytosis</keyword>
<keyword id="KW-0472">Membrane</keyword>
<keyword id="KW-0496">Mitochondrion</keyword>
<keyword id="KW-0999">Mitochondrion inner membrane</keyword>
<keyword id="KW-1000">Mitochondrion outer membrane</keyword>
<keyword id="KW-0539">Nucleus</keyword>
<keyword id="KW-0597">Phosphoprotein</keyword>
<keyword id="KW-1185">Reference proteome</keyword>
<keyword id="KW-0770">Synapse</keyword>
<keyword id="KW-0812">Transmembrane</keyword>
<keyword id="KW-1133">Transmembrane helix</keyword>
<keyword id="KW-0832">Ubl conjugation</keyword>